<name>H2G02_CYRHA</name>
<comment type="function">
    <text evidence="1">Postsynaptic neurotoxin.</text>
</comment>
<comment type="subcellular location">
    <subcellularLocation>
        <location evidence="1">Secreted</location>
    </subcellularLocation>
</comment>
<comment type="tissue specificity">
    <text>Expressed by the venom gland.</text>
</comment>
<comment type="similarity">
    <text evidence="3">Belongs to the neurotoxin 12 (Hwtx-2) family. 02 (Hwtx-2) subfamily.</text>
</comment>
<sequence length="85" mass="9356">MKVTLIAIVTCAAVLVLHTTAAEELEAESQLMEVGMPDTELAAVDEERLFECSASCEIEKEGNKDCKKKKCKGGWKCKFNMCVKV</sequence>
<keyword id="KW-1015">Disulfide bond</keyword>
<keyword id="KW-0528">Neurotoxin</keyword>
<keyword id="KW-0629">Postsynaptic neurotoxin</keyword>
<keyword id="KW-0964">Secreted</keyword>
<keyword id="KW-0732">Signal</keyword>
<keyword id="KW-0800">Toxin</keyword>
<protein>
    <recommendedName>
        <fullName>U4-theraphotoxin-Hhn1c</fullName>
        <shortName>U4-TRTX-Hhn1c</shortName>
    </recommendedName>
    <alternativeName>
        <fullName>Hainantoxin-II-7.2</fullName>
        <shortName>HNTX-II-7.2</shortName>
    </alternativeName>
</protein>
<accession>D2Y2J8</accession>
<evidence type="ECO:0000250" key="1"/>
<evidence type="ECO:0000255" key="2"/>
<evidence type="ECO:0000305" key="3"/>
<proteinExistence type="inferred from homology"/>
<reference key="1">
    <citation type="journal article" date="2010" name="J. Proteome Res.">
        <title>Molecular diversification of peptide toxins from the tarantula Haplopelma hainanum (Ornithoctonus hainana) venom based on transcriptomic, peptidomic, and genomic analyses.</title>
        <authorList>
            <person name="Tang X."/>
            <person name="Zhang Y."/>
            <person name="Hu W."/>
            <person name="Xu D."/>
            <person name="Tao H."/>
            <person name="Yang X."/>
            <person name="Li Y."/>
            <person name="Jiang L."/>
            <person name="Liang S."/>
        </authorList>
    </citation>
    <scope>NUCLEOTIDE SEQUENCE [LARGE SCALE GENOMIC DNA]</scope>
    <source>
        <tissue>Venom gland</tissue>
    </source>
</reference>
<dbReference type="EMBL" id="GU293075">
    <property type="protein sequence ID" value="ADB56891.1"/>
    <property type="molecule type" value="Genomic_DNA"/>
</dbReference>
<dbReference type="SMR" id="D2Y2J8"/>
<dbReference type="ArachnoServer" id="AS001689">
    <property type="toxin name" value="U4-theraphotoxin-Hhn1c"/>
</dbReference>
<dbReference type="GO" id="GO:0005576">
    <property type="term" value="C:extracellular region"/>
    <property type="evidence" value="ECO:0007669"/>
    <property type="project" value="UniProtKB-SubCell"/>
</dbReference>
<dbReference type="GO" id="GO:0035792">
    <property type="term" value="C:host cell postsynaptic membrane"/>
    <property type="evidence" value="ECO:0007669"/>
    <property type="project" value="UniProtKB-KW"/>
</dbReference>
<dbReference type="GO" id="GO:0090729">
    <property type="term" value="F:toxin activity"/>
    <property type="evidence" value="ECO:0007669"/>
    <property type="project" value="UniProtKB-KW"/>
</dbReference>
<dbReference type="InterPro" id="IPR012625">
    <property type="entry name" value="Hwtx-2-like"/>
</dbReference>
<dbReference type="Pfam" id="PF08089">
    <property type="entry name" value="Toxin_20"/>
    <property type="match status" value="1"/>
</dbReference>
<dbReference type="SUPFAM" id="SSF57059">
    <property type="entry name" value="omega toxin-like"/>
    <property type="match status" value="1"/>
</dbReference>
<feature type="signal peptide" evidence="2">
    <location>
        <begin position="1"/>
        <end position="22"/>
    </location>
</feature>
<feature type="propeptide" id="PRO_0000400779" evidence="1">
    <location>
        <begin position="23"/>
        <end position="48"/>
    </location>
</feature>
<feature type="peptide" id="PRO_0000400780" description="U4-theraphotoxin-Hhn1c">
    <location>
        <begin position="49"/>
        <end position="85"/>
    </location>
</feature>
<feature type="disulfide bond" evidence="1">
    <location>
        <begin position="52"/>
        <end position="66"/>
    </location>
</feature>
<feature type="disulfide bond" evidence="1">
    <location>
        <begin position="56"/>
        <end position="77"/>
    </location>
</feature>
<feature type="disulfide bond" evidence="1">
    <location>
        <begin position="71"/>
        <end position="82"/>
    </location>
</feature>
<organism>
    <name type="scientific">Cyriopagopus hainanus</name>
    <name type="common">Chinese bird spider</name>
    <name type="synonym">Haplopelma hainanum</name>
    <dbReference type="NCBI Taxonomy" id="209901"/>
    <lineage>
        <taxon>Eukaryota</taxon>
        <taxon>Metazoa</taxon>
        <taxon>Ecdysozoa</taxon>
        <taxon>Arthropoda</taxon>
        <taxon>Chelicerata</taxon>
        <taxon>Arachnida</taxon>
        <taxon>Araneae</taxon>
        <taxon>Mygalomorphae</taxon>
        <taxon>Theraphosidae</taxon>
        <taxon>Haplopelma</taxon>
    </lineage>
</organism>